<dbReference type="EMBL" id="CP000570">
    <property type="protein sequence ID" value="ABN81513.1"/>
    <property type="molecule type" value="Genomic_DNA"/>
</dbReference>
<dbReference type="RefSeq" id="WP_004198359.1">
    <property type="nucleotide sequence ID" value="NC_009074.1"/>
</dbReference>
<dbReference type="SMR" id="A3NEI3"/>
<dbReference type="GeneID" id="93171021"/>
<dbReference type="KEGG" id="bpd:BURPS668_3750"/>
<dbReference type="HOGENOM" id="CLU_072226_1_1_4"/>
<dbReference type="GO" id="GO:0015935">
    <property type="term" value="C:small ribosomal subunit"/>
    <property type="evidence" value="ECO:0007669"/>
    <property type="project" value="InterPro"/>
</dbReference>
<dbReference type="GO" id="GO:0019843">
    <property type="term" value="F:rRNA binding"/>
    <property type="evidence" value="ECO:0007669"/>
    <property type="project" value="UniProtKB-UniRule"/>
</dbReference>
<dbReference type="GO" id="GO:0003735">
    <property type="term" value="F:structural constituent of ribosome"/>
    <property type="evidence" value="ECO:0007669"/>
    <property type="project" value="InterPro"/>
</dbReference>
<dbReference type="GO" id="GO:0000049">
    <property type="term" value="F:tRNA binding"/>
    <property type="evidence" value="ECO:0007669"/>
    <property type="project" value="UniProtKB-UniRule"/>
</dbReference>
<dbReference type="GO" id="GO:0006412">
    <property type="term" value="P:translation"/>
    <property type="evidence" value="ECO:0007669"/>
    <property type="project" value="UniProtKB-UniRule"/>
</dbReference>
<dbReference type="CDD" id="cd14869">
    <property type="entry name" value="uS7_Bacteria"/>
    <property type="match status" value="1"/>
</dbReference>
<dbReference type="FunFam" id="1.10.455.10:FF:000001">
    <property type="entry name" value="30S ribosomal protein S7"/>
    <property type="match status" value="1"/>
</dbReference>
<dbReference type="Gene3D" id="1.10.455.10">
    <property type="entry name" value="Ribosomal protein S7 domain"/>
    <property type="match status" value="1"/>
</dbReference>
<dbReference type="HAMAP" id="MF_00480_B">
    <property type="entry name" value="Ribosomal_uS7_B"/>
    <property type="match status" value="1"/>
</dbReference>
<dbReference type="InterPro" id="IPR000235">
    <property type="entry name" value="Ribosomal_uS7"/>
</dbReference>
<dbReference type="InterPro" id="IPR005717">
    <property type="entry name" value="Ribosomal_uS7_bac/org-type"/>
</dbReference>
<dbReference type="InterPro" id="IPR020606">
    <property type="entry name" value="Ribosomal_uS7_CS"/>
</dbReference>
<dbReference type="InterPro" id="IPR023798">
    <property type="entry name" value="Ribosomal_uS7_dom"/>
</dbReference>
<dbReference type="InterPro" id="IPR036823">
    <property type="entry name" value="Ribosomal_uS7_dom_sf"/>
</dbReference>
<dbReference type="NCBIfam" id="TIGR01029">
    <property type="entry name" value="rpsG_bact"/>
    <property type="match status" value="1"/>
</dbReference>
<dbReference type="PANTHER" id="PTHR11205">
    <property type="entry name" value="RIBOSOMAL PROTEIN S7"/>
    <property type="match status" value="1"/>
</dbReference>
<dbReference type="Pfam" id="PF00177">
    <property type="entry name" value="Ribosomal_S7"/>
    <property type="match status" value="1"/>
</dbReference>
<dbReference type="PIRSF" id="PIRSF002122">
    <property type="entry name" value="RPS7p_RPS7a_RPS5e_RPS7o"/>
    <property type="match status" value="1"/>
</dbReference>
<dbReference type="SUPFAM" id="SSF47973">
    <property type="entry name" value="Ribosomal protein S7"/>
    <property type="match status" value="1"/>
</dbReference>
<dbReference type="PROSITE" id="PS00052">
    <property type="entry name" value="RIBOSOMAL_S7"/>
    <property type="match status" value="1"/>
</dbReference>
<name>RS7_BURP6</name>
<feature type="chain" id="PRO_1000014161" description="Small ribosomal subunit protein uS7">
    <location>
        <begin position="1"/>
        <end position="156"/>
    </location>
</feature>
<proteinExistence type="inferred from homology"/>
<sequence>MPRRREVPKREVLPDPKYGNVDVAKFMNMLMLSGKKSVAERIVYGAFEQIQTKGGKDPLEVFTVALNNVKPVVEVKSRRVGGANYQVPVEVRPSRRMALAMRWLREAAKKRSEKSMALRLAGELSEAAEGRGGAMKKRDEVHRMAEANRAFSHFRF</sequence>
<gene>
    <name evidence="1" type="primary">rpsG</name>
    <name type="ordered locus">BURPS668_3750</name>
</gene>
<evidence type="ECO:0000255" key="1">
    <source>
        <dbReference type="HAMAP-Rule" id="MF_00480"/>
    </source>
</evidence>
<evidence type="ECO:0000305" key="2"/>
<organism>
    <name type="scientific">Burkholderia pseudomallei (strain 668)</name>
    <dbReference type="NCBI Taxonomy" id="320373"/>
    <lineage>
        <taxon>Bacteria</taxon>
        <taxon>Pseudomonadati</taxon>
        <taxon>Pseudomonadota</taxon>
        <taxon>Betaproteobacteria</taxon>
        <taxon>Burkholderiales</taxon>
        <taxon>Burkholderiaceae</taxon>
        <taxon>Burkholderia</taxon>
        <taxon>pseudomallei group</taxon>
    </lineage>
</organism>
<accession>A3NEI3</accession>
<reference key="1">
    <citation type="journal article" date="2010" name="Genome Biol. Evol.">
        <title>Continuing evolution of Burkholderia mallei through genome reduction and large-scale rearrangements.</title>
        <authorList>
            <person name="Losada L."/>
            <person name="Ronning C.M."/>
            <person name="DeShazer D."/>
            <person name="Woods D."/>
            <person name="Fedorova N."/>
            <person name="Kim H.S."/>
            <person name="Shabalina S.A."/>
            <person name="Pearson T.R."/>
            <person name="Brinkac L."/>
            <person name="Tan P."/>
            <person name="Nandi T."/>
            <person name="Crabtree J."/>
            <person name="Badger J."/>
            <person name="Beckstrom-Sternberg S."/>
            <person name="Saqib M."/>
            <person name="Schutzer S.E."/>
            <person name="Keim P."/>
            <person name="Nierman W.C."/>
        </authorList>
    </citation>
    <scope>NUCLEOTIDE SEQUENCE [LARGE SCALE GENOMIC DNA]</scope>
    <source>
        <strain>668</strain>
    </source>
</reference>
<protein>
    <recommendedName>
        <fullName evidence="1">Small ribosomal subunit protein uS7</fullName>
    </recommendedName>
    <alternativeName>
        <fullName evidence="2">30S ribosomal protein S7</fullName>
    </alternativeName>
</protein>
<comment type="function">
    <text evidence="1">One of the primary rRNA binding proteins, it binds directly to 16S rRNA where it nucleates assembly of the head domain of the 30S subunit. Is located at the subunit interface close to the decoding center, probably blocks exit of the E-site tRNA.</text>
</comment>
<comment type="subunit">
    <text evidence="1">Part of the 30S ribosomal subunit. Contacts proteins S9 and S11.</text>
</comment>
<comment type="similarity">
    <text evidence="1">Belongs to the universal ribosomal protein uS7 family.</text>
</comment>
<keyword id="KW-0687">Ribonucleoprotein</keyword>
<keyword id="KW-0689">Ribosomal protein</keyword>
<keyword id="KW-0694">RNA-binding</keyword>
<keyword id="KW-0699">rRNA-binding</keyword>
<keyword id="KW-0820">tRNA-binding</keyword>